<sequence length="857" mass="95579">MCPSDFSSRSLFLEAKEEEYKQRRRVPLDSRRRVRRACLSCRAKKIRCSGSEPCQACIATPSQCKYADSLKERTPSKQFIAELSQRQKCFEYLMELLCPSLPHDTRSLVKLCKHVESSLASGSDVRSLLIPGSIDQSVLKVAATNNKDDSSAVKSANVSFPSSSTPPSSDSNFSSIQNTDLNTSIKFTENISANAIHVNQDKVIRSANNLIINSQPILPVRSFLDALGEPIYLSPTSSTYFLNSVLASLQLNSSNTPESLLIDYQSKIPEDLSSSLLPLELNTLQSTPTSVSVGSASSQGTHEYSIINLTSNHSSFSLKALKKIAHNLLPPVSVAERYANEFFLRYQSFFYFYPPSVFSNRYQILADGLVNSDTLDTGFLAVALLIVVLGHFSNNNINVLPKEVQLSHIDSMIQISEQLISSLLNRCTLSSIQAVFLLSLYHFLTGNFKCAYSYLGFAIHSAHTLGLEHGSTDNSTLNEVSTEETSIRICWSLRVLASFLYIQSGITPIINLFPNGLNSLKLPTVVPELEARHLPSSVFHFVAIIKYAEISVRSLNSLYESSSDYLMDVSNFPKLLLKVERIYSQARNWKLNLTHQQLNGTNDTSDLLFHSNVSLHLFYHYLIVKVSCPIMFFYLNNWYSVKPSSFTKGLNNKPSLEDVFSNLETCYESAKAIVQLSSKLLSAGQMDKCFYLEFEILYCSAIVLFLFSVMHLGAENPLLESIYLLEDMGSRTIDSKVRLEKLKSAIEIFDINSATEMPINEPLSASFESVNKENSQSGYMAWQNWVTELSSSNIPLGHALGNPESNNSSNSFKPSHPSQSFLVNESLDFSSNPKEPPFLPWSEALLNMDMQLNRLGP</sequence>
<organism>
    <name type="scientific">Schizosaccharomyces pombe (strain 972 / ATCC 24843)</name>
    <name type="common">Fission yeast</name>
    <dbReference type="NCBI Taxonomy" id="284812"/>
    <lineage>
        <taxon>Eukaryota</taxon>
        <taxon>Fungi</taxon>
        <taxon>Dikarya</taxon>
        <taxon>Ascomycota</taxon>
        <taxon>Taphrinomycotina</taxon>
        <taxon>Schizosaccharomycetes</taxon>
        <taxon>Schizosaccharomycetales</taxon>
        <taxon>Schizosaccharomycetaceae</taxon>
        <taxon>Schizosaccharomyces</taxon>
    </lineage>
</organism>
<protein>
    <recommendedName>
        <fullName>Thiamine repressible genes regulatory protein thi5</fullName>
    </recommendedName>
    <alternativeName>
        <fullName>Transcription factor ntf1 5</fullName>
    </alternativeName>
</protein>
<keyword id="KW-0238">DNA-binding</keyword>
<keyword id="KW-0479">Metal-binding</keyword>
<keyword id="KW-0539">Nucleus</keyword>
<keyword id="KW-1185">Reference proteome</keyword>
<keyword id="KW-0804">Transcription</keyword>
<keyword id="KW-0805">Transcription regulation</keyword>
<keyword id="KW-0862">Zinc</keyword>
<feature type="chain" id="PRO_0000351074" description="Thiamine repressible genes regulatory protein thi5">
    <location>
        <begin position="1"/>
        <end position="857"/>
    </location>
</feature>
<feature type="DNA-binding region" description="Zn(2)-C6 fungal-type" evidence="1">
    <location>
        <begin position="38"/>
        <end position="64"/>
    </location>
</feature>
<feature type="region of interest" description="Disordered" evidence="2">
    <location>
        <begin position="152"/>
        <end position="175"/>
    </location>
</feature>
<feature type="region of interest" description="Disordered" evidence="2">
    <location>
        <begin position="797"/>
        <end position="819"/>
    </location>
</feature>
<feature type="compositionally biased region" description="Low complexity" evidence="2">
    <location>
        <begin position="159"/>
        <end position="175"/>
    </location>
</feature>
<feature type="compositionally biased region" description="Polar residues" evidence="2">
    <location>
        <begin position="803"/>
        <end position="819"/>
    </location>
</feature>
<gene>
    <name type="primary">thi5</name>
    <name type="ORF">SPBP8B7.30c</name>
</gene>
<comment type="function">
    <text evidence="3">Transcription factor that activates the nmt1 promoter. Regulation of thiamine repressible genes. Negatively regulates conjugation during meiosis, by inducing negative regulators which delay conjugation. Involved in thi1 regulation.</text>
</comment>
<comment type="subcellular location">
    <subcellularLocation>
        <location evidence="1 3">Nucleus</location>
    </subcellularLocation>
</comment>
<proteinExistence type="inferred from homology"/>
<reference key="1">
    <citation type="journal article" date="2002" name="Nature">
        <title>The genome sequence of Schizosaccharomyces pombe.</title>
        <authorList>
            <person name="Wood V."/>
            <person name="Gwilliam R."/>
            <person name="Rajandream M.A."/>
            <person name="Lyne M.H."/>
            <person name="Lyne R."/>
            <person name="Stewart A."/>
            <person name="Sgouros J.G."/>
            <person name="Peat N."/>
            <person name="Hayles J."/>
            <person name="Baker S.G."/>
            <person name="Basham D."/>
            <person name="Bowman S."/>
            <person name="Brooks K."/>
            <person name="Brown D."/>
            <person name="Brown S."/>
            <person name="Chillingworth T."/>
            <person name="Churcher C.M."/>
            <person name="Collins M."/>
            <person name="Connor R."/>
            <person name="Cronin A."/>
            <person name="Davis P."/>
            <person name="Feltwell T."/>
            <person name="Fraser A."/>
            <person name="Gentles S."/>
            <person name="Goble A."/>
            <person name="Hamlin N."/>
            <person name="Harris D.E."/>
            <person name="Hidalgo J."/>
            <person name="Hodgson G."/>
            <person name="Holroyd S."/>
            <person name="Hornsby T."/>
            <person name="Howarth S."/>
            <person name="Huckle E.J."/>
            <person name="Hunt S."/>
            <person name="Jagels K."/>
            <person name="James K.D."/>
            <person name="Jones L."/>
            <person name="Jones M."/>
            <person name="Leather S."/>
            <person name="McDonald S."/>
            <person name="McLean J."/>
            <person name="Mooney P."/>
            <person name="Moule S."/>
            <person name="Mungall K.L."/>
            <person name="Murphy L.D."/>
            <person name="Niblett D."/>
            <person name="Odell C."/>
            <person name="Oliver K."/>
            <person name="O'Neil S."/>
            <person name="Pearson D."/>
            <person name="Quail M.A."/>
            <person name="Rabbinowitsch E."/>
            <person name="Rutherford K.M."/>
            <person name="Rutter S."/>
            <person name="Saunders D."/>
            <person name="Seeger K."/>
            <person name="Sharp S."/>
            <person name="Skelton J."/>
            <person name="Simmonds M.N."/>
            <person name="Squares R."/>
            <person name="Squares S."/>
            <person name="Stevens K."/>
            <person name="Taylor K."/>
            <person name="Taylor R.G."/>
            <person name="Tivey A."/>
            <person name="Walsh S.V."/>
            <person name="Warren T."/>
            <person name="Whitehead S."/>
            <person name="Woodward J.R."/>
            <person name="Volckaert G."/>
            <person name="Aert R."/>
            <person name="Robben J."/>
            <person name="Grymonprez B."/>
            <person name="Weltjens I."/>
            <person name="Vanstreels E."/>
            <person name="Rieger M."/>
            <person name="Schaefer M."/>
            <person name="Mueller-Auer S."/>
            <person name="Gabel C."/>
            <person name="Fuchs M."/>
            <person name="Duesterhoeft A."/>
            <person name="Fritzc C."/>
            <person name="Holzer E."/>
            <person name="Moestl D."/>
            <person name="Hilbert H."/>
            <person name="Borzym K."/>
            <person name="Langer I."/>
            <person name="Beck A."/>
            <person name="Lehrach H."/>
            <person name="Reinhardt R."/>
            <person name="Pohl T.M."/>
            <person name="Eger P."/>
            <person name="Zimmermann W."/>
            <person name="Wedler H."/>
            <person name="Wambutt R."/>
            <person name="Purnelle B."/>
            <person name="Goffeau A."/>
            <person name="Cadieu E."/>
            <person name="Dreano S."/>
            <person name="Gloux S."/>
            <person name="Lelaure V."/>
            <person name="Mottier S."/>
            <person name="Galibert F."/>
            <person name="Aves S.J."/>
            <person name="Xiang Z."/>
            <person name="Hunt C."/>
            <person name="Moore K."/>
            <person name="Hurst S.M."/>
            <person name="Lucas M."/>
            <person name="Rochet M."/>
            <person name="Gaillardin C."/>
            <person name="Tallada V.A."/>
            <person name="Garzon A."/>
            <person name="Thode G."/>
            <person name="Daga R.R."/>
            <person name="Cruzado L."/>
            <person name="Jimenez J."/>
            <person name="Sanchez M."/>
            <person name="del Rey F."/>
            <person name="Benito J."/>
            <person name="Dominguez A."/>
            <person name="Revuelta J.L."/>
            <person name="Moreno S."/>
            <person name="Armstrong J."/>
            <person name="Forsburg S.L."/>
            <person name="Cerutti L."/>
            <person name="Lowe T."/>
            <person name="McCombie W.R."/>
            <person name="Paulsen I."/>
            <person name="Potashkin J."/>
            <person name="Shpakovski G.V."/>
            <person name="Ussery D."/>
            <person name="Barrell B.G."/>
            <person name="Nurse P."/>
        </authorList>
    </citation>
    <scope>NUCLEOTIDE SEQUENCE [LARGE SCALE GENOMIC DNA]</scope>
    <source>
        <strain>972 / ATCC 24843</strain>
    </source>
</reference>
<reference key="2">
    <citation type="journal article" date="2006" name="Curr. Genet.">
        <title>Joint regulation of the nmt1 promoter and sporulation by Thi1 and Thi5 in Schizosaccharomyces pombe.</title>
        <authorList>
            <person name="McQuire T.A."/>
            <person name="Young P.G."/>
        </authorList>
    </citation>
    <scope>FUNCTION</scope>
    <scope>SUBCELLULAR LOCATION</scope>
</reference>
<name>THI5_SCHPO</name>
<accession>O94278</accession>
<evidence type="ECO:0000255" key="1">
    <source>
        <dbReference type="PROSITE-ProRule" id="PRU00227"/>
    </source>
</evidence>
<evidence type="ECO:0000256" key="2">
    <source>
        <dbReference type="SAM" id="MobiDB-lite"/>
    </source>
</evidence>
<evidence type="ECO:0000269" key="3">
    <source>
    </source>
</evidence>
<dbReference type="EMBL" id="CU329671">
    <property type="protein sequence ID" value="CAA21815.1"/>
    <property type="molecule type" value="Genomic_DNA"/>
</dbReference>
<dbReference type="PIR" id="T40824">
    <property type="entry name" value="T40824"/>
</dbReference>
<dbReference type="RefSeq" id="NP_596537.1">
    <property type="nucleotide sequence ID" value="NM_001022458.2"/>
</dbReference>
<dbReference type="SMR" id="O94278"/>
<dbReference type="BioGRID" id="277899">
    <property type="interactions" value="16"/>
</dbReference>
<dbReference type="FunCoup" id="O94278">
    <property type="interactions" value="270"/>
</dbReference>
<dbReference type="STRING" id="284812.O94278"/>
<dbReference type="PaxDb" id="4896-SPBP8B7.30c.1"/>
<dbReference type="EnsemblFungi" id="SPBP8B7.30c.1">
    <property type="protein sequence ID" value="SPBP8B7.30c.1:pep"/>
    <property type="gene ID" value="SPBP8B7.30c"/>
</dbReference>
<dbReference type="GeneID" id="2541388"/>
<dbReference type="KEGG" id="spo:2541388"/>
<dbReference type="PomBase" id="SPBP8B7.30c">
    <property type="gene designation" value="thi5"/>
</dbReference>
<dbReference type="VEuPathDB" id="FungiDB:SPBP8B7.30c"/>
<dbReference type="HOGENOM" id="CLU_360982_0_0_1"/>
<dbReference type="InParanoid" id="O94278"/>
<dbReference type="OMA" id="FEHICPS"/>
<dbReference type="PhylomeDB" id="O94278"/>
<dbReference type="PRO" id="PR:O94278"/>
<dbReference type="Proteomes" id="UP000002485">
    <property type="component" value="Chromosome II"/>
</dbReference>
<dbReference type="GO" id="GO:0016020">
    <property type="term" value="C:membrane"/>
    <property type="evidence" value="ECO:0000255"/>
    <property type="project" value="PomBase"/>
</dbReference>
<dbReference type="GO" id="GO:0005634">
    <property type="term" value="C:nucleus"/>
    <property type="evidence" value="ECO:0000314"/>
    <property type="project" value="PomBase"/>
</dbReference>
<dbReference type="GO" id="GO:0001228">
    <property type="term" value="F:DNA-binding transcription activator activity, RNA polymerase II-specific"/>
    <property type="evidence" value="ECO:0000315"/>
    <property type="project" value="PomBase"/>
</dbReference>
<dbReference type="GO" id="GO:0000978">
    <property type="term" value="F:RNA polymerase II cis-regulatory region sequence-specific DNA binding"/>
    <property type="evidence" value="ECO:0000255"/>
    <property type="project" value="PomBase"/>
</dbReference>
<dbReference type="GO" id="GO:0008270">
    <property type="term" value="F:zinc ion binding"/>
    <property type="evidence" value="ECO:0000255"/>
    <property type="project" value="PomBase"/>
</dbReference>
<dbReference type="GO" id="GO:0006351">
    <property type="term" value="P:DNA-templated transcription"/>
    <property type="evidence" value="ECO:0007669"/>
    <property type="project" value="InterPro"/>
</dbReference>
<dbReference type="GO" id="GO:0090180">
    <property type="term" value="P:positive regulation of thiamine biosynthetic process"/>
    <property type="evidence" value="ECO:0000269"/>
    <property type="project" value="PomBase"/>
</dbReference>
<dbReference type="GO" id="GO:0045944">
    <property type="term" value="P:positive regulation of transcription by RNA polymerase II"/>
    <property type="evidence" value="ECO:0000318"/>
    <property type="project" value="GO_Central"/>
</dbReference>
<dbReference type="CDD" id="cd12148">
    <property type="entry name" value="fungal_TF_MHR"/>
    <property type="match status" value="1"/>
</dbReference>
<dbReference type="CDD" id="cd00067">
    <property type="entry name" value="GAL4"/>
    <property type="match status" value="1"/>
</dbReference>
<dbReference type="FunFam" id="4.10.240.10:FF:000028">
    <property type="entry name" value="Uncharacterized transcriptional regulatory protein C1773.12"/>
    <property type="match status" value="1"/>
</dbReference>
<dbReference type="Gene3D" id="4.10.240.10">
    <property type="entry name" value="Zn(2)-C6 fungal-type DNA-binding domain"/>
    <property type="match status" value="1"/>
</dbReference>
<dbReference type="InterPro" id="IPR051711">
    <property type="entry name" value="Stress_Response_Reg"/>
</dbReference>
<dbReference type="InterPro" id="IPR007219">
    <property type="entry name" value="Transcription_factor_dom_fun"/>
</dbReference>
<dbReference type="InterPro" id="IPR036864">
    <property type="entry name" value="Zn2-C6_fun-type_DNA-bd_sf"/>
</dbReference>
<dbReference type="InterPro" id="IPR001138">
    <property type="entry name" value="Zn2Cys6_DnaBD"/>
</dbReference>
<dbReference type="PANTHER" id="PTHR47540:SF1">
    <property type="entry name" value="ACTIVATOR OF STRESS GENES 1-RELATED"/>
    <property type="match status" value="1"/>
</dbReference>
<dbReference type="PANTHER" id="PTHR47540">
    <property type="entry name" value="THIAMINE REPRESSIBLE GENES REGULATORY PROTEIN THI5"/>
    <property type="match status" value="1"/>
</dbReference>
<dbReference type="Pfam" id="PF04082">
    <property type="entry name" value="Fungal_trans"/>
    <property type="match status" value="1"/>
</dbReference>
<dbReference type="Pfam" id="PF00172">
    <property type="entry name" value="Zn_clus"/>
    <property type="match status" value="1"/>
</dbReference>
<dbReference type="SMART" id="SM00066">
    <property type="entry name" value="GAL4"/>
    <property type="match status" value="1"/>
</dbReference>
<dbReference type="SUPFAM" id="SSF57701">
    <property type="entry name" value="Zn2/Cys6 DNA-binding domain"/>
    <property type="match status" value="1"/>
</dbReference>
<dbReference type="PROSITE" id="PS00463">
    <property type="entry name" value="ZN2_CY6_FUNGAL_1"/>
    <property type="match status" value="1"/>
</dbReference>
<dbReference type="PROSITE" id="PS50048">
    <property type="entry name" value="ZN2_CY6_FUNGAL_2"/>
    <property type="match status" value="1"/>
</dbReference>